<gene>
    <name type="primary">Adh</name>
</gene>
<accession>Q07588</accession>
<dbReference type="EC" id="1.1.1.1"/>
<dbReference type="EMBL" id="M97638">
    <property type="protein sequence ID" value="AAA28357.1"/>
    <property type="molecule type" value="Genomic_DNA"/>
</dbReference>
<dbReference type="PIR" id="JN0566">
    <property type="entry name" value="JN0566"/>
</dbReference>
<dbReference type="SMR" id="Q07588"/>
<dbReference type="GO" id="GO:0005737">
    <property type="term" value="C:cytoplasm"/>
    <property type="evidence" value="ECO:0007669"/>
    <property type="project" value="TreeGrafter"/>
</dbReference>
<dbReference type="GO" id="GO:0004022">
    <property type="term" value="F:alcohol dehydrogenase (NAD+) activity"/>
    <property type="evidence" value="ECO:0000250"/>
    <property type="project" value="UniProtKB"/>
</dbReference>
<dbReference type="GO" id="GO:0006066">
    <property type="term" value="P:alcohol metabolic process"/>
    <property type="evidence" value="ECO:0007669"/>
    <property type="project" value="InterPro"/>
</dbReference>
<dbReference type="CDD" id="cd05323">
    <property type="entry name" value="ADH_SDR_c_like"/>
    <property type="match status" value="1"/>
</dbReference>
<dbReference type="FunFam" id="3.40.50.720:FF:000302">
    <property type="entry name" value="Alcohol dehydrogenase"/>
    <property type="match status" value="1"/>
</dbReference>
<dbReference type="Gene3D" id="3.40.50.720">
    <property type="entry name" value="NAD(P)-binding Rossmann-like Domain"/>
    <property type="match status" value="1"/>
</dbReference>
<dbReference type="InterPro" id="IPR002425">
    <property type="entry name" value="ADH_Drosophila-type"/>
</dbReference>
<dbReference type="InterPro" id="IPR036291">
    <property type="entry name" value="NAD(P)-bd_dom_sf"/>
</dbReference>
<dbReference type="InterPro" id="IPR020904">
    <property type="entry name" value="Sc_DH/Rdtase_CS"/>
</dbReference>
<dbReference type="InterPro" id="IPR002347">
    <property type="entry name" value="SDR_fam"/>
</dbReference>
<dbReference type="PANTHER" id="PTHR44229">
    <property type="entry name" value="15-HYDROXYPROSTAGLANDIN DEHYDROGENASE [NAD(+)]"/>
    <property type="match status" value="1"/>
</dbReference>
<dbReference type="PANTHER" id="PTHR44229:SF8">
    <property type="entry name" value="ALCOHOL DEHYDROGENASE-RELATED"/>
    <property type="match status" value="1"/>
</dbReference>
<dbReference type="Pfam" id="PF00106">
    <property type="entry name" value="adh_short"/>
    <property type="match status" value="1"/>
</dbReference>
<dbReference type="PRINTS" id="PR01168">
    <property type="entry name" value="ALCDHDRGNASE"/>
</dbReference>
<dbReference type="PRINTS" id="PR01167">
    <property type="entry name" value="INSADHFAMILY"/>
</dbReference>
<dbReference type="PRINTS" id="PR00080">
    <property type="entry name" value="SDRFAMILY"/>
</dbReference>
<dbReference type="SUPFAM" id="SSF51735">
    <property type="entry name" value="NAD(P)-binding Rossmann-fold domains"/>
    <property type="match status" value="1"/>
</dbReference>
<dbReference type="PROSITE" id="PS00061">
    <property type="entry name" value="ADH_SHORT"/>
    <property type="match status" value="1"/>
</dbReference>
<comment type="catalytic activity">
    <reaction evidence="2">
        <text>a primary alcohol + NAD(+) = an aldehyde + NADH + H(+)</text>
        <dbReference type="Rhea" id="RHEA:10736"/>
        <dbReference type="ChEBI" id="CHEBI:15378"/>
        <dbReference type="ChEBI" id="CHEBI:15734"/>
        <dbReference type="ChEBI" id="CHEBI:17478"/>
        <dbReference type="ChEBI" id="CHEBI:57540"/>
        <dbReference type="ChEBI" id="CHEBI:57945"/>
        <dbReference type="EC" id="1.1.1.1"/>
    </reaction>
</comment>
<comment type="catalytic activity">
    <reaction evidence="2">
        <text>a secondary alcohol + NAD(+) = a ketone + NADH + H(+)</text>
        <dbReference type="Rhea" id="RHEA:10740"/>
        <dbReference type="ChEBI" id="CHEBI:15378"/>
        <dbReference type="ChEBI" id="CHEBI:17087"/>
        <dbReference type="ChEBI" id="CHEBI:35681"/>
        <dbReference type="ChEBI" id="CHEBI:57540"/>
        <dbReference type="ChEBI" id="CHEBI:57945"/>
        <dbReference type="EC" id="1.1.1.1"/>
    </reaction>
</comment>
<comment type="subunit">
    <text>Homodimer.</text>
</comment>
<comment type="similarity">
    <text evidence="3">Belongs to the short-chain dehydrogenases/reductases (SDR) family.</text>
</comment>
<reference key="1">
    <citation type="journal article" date="1993" name="Gene">
        <title>Adh and Adh-dup sequences of Drosophila lebanonensis and D. immigrans: interspecies comparisons.</title>
        <authorList>
            <person name="Albalat R."/>
            <person name="Gonzalez-Duarte R."/>
        </authorList>
    </citation>
    <scope>NUCLEOTIDE SEQUENCE [GENOMIC DNA]</scope>
</reference>
<keyword id="KW-0520">NAD</keyword>
<keyword id="KW-0560">Oxidoreductase</keyword>
<sequence length="254" mass="27273">MAIANKNIIFVAGLGGIGLDTSKGIVKAGPKNLVILDRIENPAAIAELKAINPKVTVTFYPYDVTVPLAETKKLLTTIFAKLKTVDLLINGAGILNDHQIELTIAINFTGLVNTTTAIMDFWDKRKGGPGGAIANICSVTGFNAIYQVPVYSASKAAVVSFTSSLAKLAPITGVIAYSINPGITKTTLVHKFNSWLDVEPRVAELLDEHPTQTTTQCSQNFVKAIEANQNGAIWKLDLGRLDAVNWTKHWDSGI</sequence>
<evidence type="ECO:0000250" key="1"/>
<evidence type="ECO:0000255" key="2">
    <source>
        <dbReference type="PROSITE-ProRule" id="PRU10001"/>
    </source>
</evidence>
<evidence type="ECO:0000305" key="3"/>
<organism>
    <name type="scientific">Drosophila immigrans</name>
    <name type="common">Fruit fly</name>
    <dbReference type="NCBI Taxonomy" id="7250"/>
    <lineage>
        <taxon>Eukaryota</taxon>
        <taxon>Metazoa</taxon>
        <taxon>Ecdysozoa</taxon>
        <taxon>Arthropoda</taxon>
        <taxon>Hexapoda</taxon>
        <taxon>Insecta</taxon>
        <taxon>Pterygota</taxon>
        <taxon>Neoptera</taxon>
        <taxon>Endopterygota</taxon>
        <taxon>Diptera</taxon>
        <taxon>Brachycera</taxon>
        <taxon>Muscomorpha</taxon>
        <taxon>Ephydroidea</taxon>
        <taxon>Drosophilidae</taxon>
        <taxon>Drosophila</taxon>
    </lineage>
</organism>
<name>ADH_DROIM</name>
<feature type="initiator methionine" description="Removed" evidence="1">
    <location>
        <position position="1"/>
    </location>
</feature>
<feature type="chain" id="PRO_0000054468" description="Alcohol dehydrogenase">
    <location>
        <begin position="2"/>
        <end position="254"/>
    </location>
</feature>
<feature type="active site" description="Proton acceptor" evidence="2">
    <location>
        <position position="151"/>
    </location>
</feature>
<feature type="binding site" evidence="1">
    <location>
        <begin position="10"/>
        <end position="33"/>
    </location>
    <ligand>
        <name>NAD(+)</name>
        <dbReference type="ChEBI" id="CHEBI:57540"/>
    </ligand>
</feature>
<feature type="binding site" evidence="1">
    <location>
        <position position="138"/>
    </location>
    <ligand>
        <name>substrate</name>
    </ligand>
</feature>
<protein>
    <recommendedName>
        <fullName>Alcohol dehydrogenase</fullName>
        <ecNumber>1.1.1.1</ecNumber>
    </recommendedName>
</protein>
<proteinExistence type="inferred from homology"/>